<comment type="function">
    <molecule>Isoform Peroxisomal</molecule>
    <text evidence="4">Catalyzes the transamination of glyoxylate to glycine and contributes to the glyoxylate detoxification.</text>
</comment>
<comment type="function">
    <molecule>Isoform Mitochondrial</molecule>
    <text evidence="3">Catalyzes the transamination between L-serine and pyruvate and contributes to gluconeogenesis from the L-serine metabolism.</text>
</comment>
<comment type="catalytic activity">
    <molecule>Isoform Mitochondrial</molecule>
    <reaction evidence="3">
        <text>L-serine + pyruvate = 3-hydroxypyruvate + L-alanine</text>
        <dbReference type="Rhea" id="RHEA:22852"/>
        <dbReference type="ChEBI" id="CHEBI:15361"/>
        <dbReference type="ChEBI" id="CHEBI:17180"/>
        <dbReference type="ChEBI" id="CHEBI:33384"/>
        <dbReference type="ChEBI" id="CHEBI:57972"/>
        <dbReference type="EC" id="2.6.1.51"/>
    </reaction>
    <physiologicalReaction direction="left-to-right" evidence="3">
        <dbReference type="Rhea" id="RHEA:22853"/>
    </physiologicalReaction>
</comment>
<comment type="catalytic activity">
    <molecule>Isoform Peroxisomal</molecule>
    <reaction evidence="4">
        <text>glyoxylate + L-alanine = glycine + pyruvate</text>
        <dbReference type="Rhea" id="RHEA:24248"/>
        <dbReference type="ChEBI" id="CHEBI:15361"/>
        <dbReference type="ChEBI" id="CHEBI:36655"/>
        <dbReference type="ChEBI" id="CHEBI:57305"/>
        <dbReference type="ChEBI" id="CHEBI:57972"/>
        <dbReference type="EC" id="2.6.1.44"/>
    </reaction>
    <physiologicalReaction direction="left-to-right" evidence="4">
        <dbReference type="Rhea" id="RHEA:24249"/>
    </physiologicalReaction>
</comment>
<comment type="cofactor">
    <cofactor evidence="4">
        <name>pyridoxal 5'-phosphate</name>
        <dbReference type="ChEBI" id="CHEBI:597326"/>
    </cofactor>
</comment>
<comment type="subunit">
    <text evidence="4">Homodimer.</text>
</comment>
<comment type="subcellular location">
    <molecule>Isoform Peroxisomal</molecule>
    <subcellularLocation>
        <location evidence="4">Peroxisome</location>
    </subcellularLocation>
</comment>
<comment type="subcellular location">
    <molecule>Isoform Mitochondrial</molecule>
    <subcellularLocation>
        <location evidence="6">Mitochondrion matrix</location>
    </subcellularLocation>
    <text evidence="6">More than 90% are mitochondrial.</text>
</comment>
<comment type="alternative products">
    <event type="alternative initiation"/>
    <isoform>
        <id>P41689-1</id>
        <name>Mitochondrial</name>
        <sequence type="displayed"/>
    </isoform>
    <isoform>
        <id>P41689-2</id>
        <name>Peroxisomal</name>
        <sequence type="described" ref="VSP_018643"/>
    </isoform>
</comment>
<comment type="similarity">
    <text evidence="5">Belongs to the class-V pyridoxal-phosphate-dependent aminotransferase family.</text>
</comment>
<comment type="caution">
    <text evidence="5">The intracellular compartmentalization of AGTX in mammalian hepatocytes is species dependent. In human and rabbit, AGTX is peroxisomal. In new world monkeys (marmoset) and rodents (rat and mouse), it is distributed approximately evenly between peroxisomes and mitochondria. In carnivores, like cat, the great majority of the enzyme is mitochondrial with only a small proportion being peroxisomal.</text>
</comment>
<name>AGT1_FELCA</name>
<sequence>MFRALARASATLGPQVAGWARTMATCQLLVAPPEALLRPLSIPNRLLLGPGPSNLAPRVLVAGGKQMIGHMHKEMFQIMDDIKQGIQYVFQTKNPLTLAISGSGHCALEAALFNILEPGDPFLVGVNGIWGQRAADIGERIGARVHPMIKDPGNHYTLQELEEALAQHKPVLLFLTQGESSSGVLQPLDGYGELCHRYNCLLLVDSVASLCGTPIYMDQQGIDVLYSGSQKVLNSPPGTSLISFSDKAKNKIYTRKTKPVSFYLDMKWLANIWGCDGKPRIYHHTTPVVSLYSLRESLALIAEQGLENSWRQHREVTAYLHGRLQGLGLQLFVKDPALRLPTVTTVAVPAGYDWRDIVNYVMDHFDIEITGGLGPSMGKVLRIGLLGCNATRENVDRVIQALQEALQRCSRNKL</sequence>
<feature type="transit peptide" description="Mitochondrion" evidence="1">
    <location>
        <begin position="1"/>
        <end position="23"/>
    </location>
</feature>
<feature type="chain" id="PRO_0000001286" description="Alanine--glyoxylate aminotransferase">
    <location>
        <begin position="24"/>
        <end position="414"/>
    </location>
</feature>
<feature type="short sequence motif" description="Microbody targeting signal" evidence="1">
    <location>
        <begin position="412"/>
        <end position="414"/>
    </location>
</feature>
<feature type="binding site" evidence="1">
    <location>
        <position position="382"/>
    </location>
    <ligand>
        <name>substrate</name>
    </ligand>
</feature>
<feature type="modified residue" description="N6-(pyridoxal phosphate)lysine" evidence="1">
    <location>
        <position position="231"/>
    </location>
</feature>
<feature type="modified residue" description="N6-acetyllysine; alternate" evidence="2">
    <location>
        <position position="247"/>
    </location>
</feature>
<feature type="modified residue" description="N6-succinyllysine; alternate" evidence="2">
    <location>
        <position position="247"/>
    </location>
</feature>
<feature type="modified residue" description="N6-acetyllysine" evidence="2">
    <location>
        <position position="256"/>
    </location>
</feature>
<feature type="modified residue" description="N6-acetyllysine" evidence="2">
    <location>
        <position position="334"/>
    </location>
</feature>
<feature type="splice variant" id="VSP_018643" description="In isoform Peroxisomal." evidence="5">
    <location>
        <begin position="1"/>
        <end position="22"/>
    </location>
</feature>
<accession>P41689</accession>
<evidence type="ECO:0000250" key="1"/>
<evidence type="ECO:0000250" key="2">
    <source>
        <dbReference type="UniProtKB" id="O35423"/>
    </source>
</evidence>
<evidence type="ECO:0000250" key="3">
    <source>
        <dbReference type="UniProtKB" id="P09139"/>
    </source>
</evidence>
<evidence type="ECO:0000250" key="4">
    <source>
        <dbReference type="UniProtKB" id="P21549"/>
    </source>
</evidence>
<evidence type="ECO:0000305" key="5"/>
<evidence type="ECO:0000305" key="6">
    <source>
    </source>
</evidence>
<dbReference type="EC" id="2.6.1.44" evidence="4"/>
<dbReference type="EC" id="2.6.1.51" evidence="3"/>
<dbReference type="EMBL" id="X75923">
    <property type="protein sequence ID" value="CAA53527.1"/>
    <property type="molecule type" value="mRNA"/>
</dbReference>
<dbReference type="PIR" id="S43253">
    <property type="entry name" value="S43253"/>
</dbReference>
<dbReference type="RefSeq" id="NP_001036031.1">
    <molecule id="P41689-1"/>
    <property type="nucleotide sequence ID" value="NM_001042566.1"/>
</dbReference>
<dbReference type="SMR" id="P41689"/>
<dbReference type="STRING" id="9685.ENSFCAP00000036433"/>
<dbReference type="PaxDb" id="9685-ENSFCAP00000009698"/>
<dbReference type="Ensembl" id="ENSFCAT00000043147.3">
    <molecule id="P41689-1"/>
    <property type="protein sequence ID" value="ENSFCAP00000036433.1"/>
    <property type="gene ID" value="ENSFCAG00000010448.6"/>
</dbReference>
<dbReference type="GeneID" id="727692"/>
<dbReference type="KEGG" id="fca:727692"/>
<dbReference type="CTD" id="189"/>
<dbReference type="eggNOG" id="KOG2862">
    <property type="taxonomic scope" value="Eukaryota"/>
</dbReference>
<dbReference type="GeneTree" id="ENSGT00940000153241"/>
<dbReference type="InParanoid" id="P41689"/>
<dbReference type="OMA" id="GSDRVYH"/>
<dbReference type="OrthoDB" id="7403325at2759"/>
<dbReference type="SABIO-RK" id="P41689"/>
<dbReference type="Proteomes" id="UP000011712">
    <property type="component" value="Chromosome C1"/>
</dbReference>
<dbReference type="Bgee" id="ENSFCAG00000010448">
    <property type="expression patterns" value="Expressed in liver and 4 other cell types or tissues"/>
</dbReference>
<dbReference type="GO" id="GO:0005759">
    <property type="term" value="C:mitochondrial matrix"/>
    <property type="evidence" value="ECO:0007669"/>
    <property type="project" value="UniProtKB-SubCell"/>
</dbReference>
<dbReference type="GO" id="GO:0005739">
    <property type="term" value="C:mitochondrion"/>
    <property type="evidence" value="ECO:0000304"/>
    <property type="project" value="HGNC-UCL"/>
</dbReference>
<dbReference type="GO" id="GO:0005777">
    <property type="term" value="C:peroxisome"/>
    <property type="evidence" value="ECO:0000250"/>
    <property type="project" value="UniProtKB"/>
</dbReference>
<dbReference type="GO" id="GO:0008453">
    <property type="term" value="F:alanine-glyoxylate transaminase activity"/>
    <property type="evidence" value="ECO:0000250"/>
    <property type="project" value="UniProtKB"/>
</dbReference>
<dbReference type="GO" id="GO:0004760">
    <property type="term" value="F:L-serine-pyruvate transaminase activity"/>
    <property type="evidence" value="ECO:0000318"/>
    <property type="project" value="GO_Central"/>
</dbReference>
<dbReference type="GO" id="GO:0042803">
    <property type="term" value="F:protein homodimerization activity"/>
    <property type="evidence" value="ECO:0000250"/>
    <property type="project" value="UniProtKB"/>
</dbReference>
<dbReference type="GO" id="GO:0019265">
    <property type="term" value="P:glycine biosynthetic process, by transamination of glyoxylate"/>
    <property type="evidence" value="ECO:0000318"/>
    <property type="project" value="GO_Central"/>
</dbReference>
<dbReference type="GO" id="GO:0046487">
    <property type="term" value="P:glyoxylate metabolic process"/>
    <property type="evidence" value="ECO:0000250"/>
    <property type="project" value="UniProtKB"/>
</dbReference>
<dbReference type="CDD" id="cd06451">
    <property type="entry name" value="AGAT_like"/>
    <property type="match status" value="1"/>
</dbReference>
<dbReference type="FunFam" id="3.90.1150.10:FF:000393">
    <property type="entry name" value="Serine--pyruvate aminotransferase"/>
    <property type="match status" value="1"/>
</dbReference>
<dbReference type="FunFam" id="3.40.640.10:FF:000027">
    <property type="entry name" value="Serine--pyruvate aminotransferase, mitochondrial"/>
    <property type="match status" value="1"/>
</dbReference>
<dbReference type="Gene3D" id="3.90.1150.10">
    <property type="entry name" value="Aspartate Aminotransferase, domain 1"/>
    <property type="match status" value="1"/>
</dbReference>
<dbReference type="Gene3D" id="3.40.640.10">
    <property type="entry name" value="Type I PLP-dependent aspartate aminotransferase-like (Major domain)"/>
    <property type="match status" value="1"/>
</dbReference>
<dbReference type="InterPro" id="IPR000192">
    <property type="entry name" value="Aminotrans_V_dom"/>
</dbReference>
<dbReference type="InterPro" id="IPR020578">
    <property type="entry name" value="Aminotrans_V_PyrdxlP_BS"/>
</dbReference>
<dbReference type="InterPro" id="IPR015424">
    <property type="entry name" value="PyrdxlP-dep_Trfase"/>
</dbReference>
<dbReference type="InterPro" id="IPR015421">
    <property type="entry name" value="PyrdxlP-dep_Trfase_major"/>
</dbReference>
<dbReference type="InterPro" id="IPR015422">
    <property type="entry name" value="PyrdxlP-dep_Trfase_small"/>
</dbReference>
<dbReference type="InterPro" id="IPR024169">
    <property type="entry name" value="SP_NH2Trfase/AEP_transaminase"/>
</dbReference>
<dbReference type="PANTHER" id="PTHR21152:SF40">
    <property type="entry name" value="ALANINE--GLYOXYLATE AMINOTRANSFERASE"/>
    <property type="match status" value="1"/>
</dbReference>
<dbReference type="PANTHER" id="PTHR21152">
    <property type="entry name" value="AMINOTRANSFERASE CLASS V"/>
    <property type="match status" value="1"/>
</dbReference>
<dbReference type="Pfam" id="PF00266">
    <property type="entry name" value="Aminotran_5"/>
    <property type="match status" value="1"/>
</dbReference>
<dbReference type="PIRSF" id="PIRSF000524">
    <property type="entry name" value="SPT"/>
    <property type="match status" value="1"/>
</dbReference>
<dbReference type="SUPFAM" id="SSF53383">
    <property type="entry name" value="PLP-dependent transferases"/>
    <property type="match status" value="1"/>
</dbReference>
<dbReference type="PROSITE" id="PS00595">
    <property type="entry name" value="AA_TRANSFER_CLASS_5"/>
    <property type="match status" value="1"/>
</dbReference>
<reference key="1">
    <citation type="journal article" date="1994" name="Eur. J. Biochem.">
        <title>Molecular evolution of alanine/glyoxylate aminotransferase 1 intracellular targeting. Analysis of the feline gene.</title>
        <authorList>
            <person name="Lumb M.J."/>
            <person name="Purdue P.E."/>
            <person name="Danpure C.J."/>
        </authorList>
    </citation>
    <scope>NUCLEOTIDE SEQUENCE [MRNA]</scope>
    <scope>SUBCELLULAR LOCATION</scope>
    <source>
        <tissue>Liver</tissue>
    </source>
</reference>
<protein>
    <recommendedName>
        <fullName evidence="4">Alanine--glyoxylate aminotransferase</fullName>
        <shortName>AGT</shortName>
        <ecNumber evidence="4">2.6.1.44</ecNumber>
    </recommendedName>
    <alternativeName>
        <fullName evidence="3">Serine--pyruvate aminotransferase, mitochondrial</fullName>
        <shortName>SPT</shortName>
        <ecNumber evidence="3">2.6.1.51</ecNumber>
    </alternativeName>
</protein>
<gene>
    <name evidence="4" type="primary">AGXT</name>
    <name type="synonym">AGT1</name>
</gene>
<organism>
    <name type="scientific">Felis catus</name>
    <name type="common">Cat</name>
    <name type="synonym">Felis silvestris catus</name>
    <dbReference type="NCBI Taxonomy" id="9685"/>
    <lineage>
        <taxon>Eukaryota</taxon>
        <taxon>Metazoa</taxon>
        <taxon>Chordata</taxon>
        <taxon>Craniata</taxon>
        <taxon>Vertebrata</taxon>
        <taxon>Euteleostomi</taxon>
        <taxon>Mammalia</taxon>
        <taxon>Eutheria</taxon>
        <taxon>Laurasiatheria</taxon>
        <taxon>Carnivora</taxon>
        <taxon>Feliformia</taxon>
        <taxon>Felidae</taxon>
        <taxon>Felinae</taxon>
        <taxon>Felis</taxon>
    </lineage>
</organism>
<proteinExistence type="evidence at transcript level"/>
<keyword id="KW-0007">Acetylation</keyword>
<keyword id="KW-0024">Alternative initiation</keyword>
<keyword id="KW-0032">Aminotransferase</keyword>
<keyword id="KW-0496">Mitochondrion</keyword>
<keyword id="KW-0576">Peroxisome</keyword>
<keyword id="KW-0663">Pyridoxal phosphate</keyword>
<keyword id="KW-1185">Reference proteome</keyword>
<keyword id="KW-0808">Transferase</keyword>
<keyword id="KW-0809">Transit peptide</keyword>